<protein>
    <recommendedName>
        <fullName evidence="1">Large ribosomal subunit protein bL28</fullName>
    </recommendedName>
    <alternativeName>
        <fullName evidence="2">50S ribosomal protein L28</fullName>
    </alternativeName>
</protein>
<evidence type="ECO:0000255" key="1">
    <source>
        <dbReference type="HAMAP-Rule" id="MF_00373"/>
    </source>
</evidence>
<evidence type="ECO:0000305" key="2"/>
<accession>B2THS7</accession>
<gene>
    <name evidence="1" type="primary">rpmB</name>
    <name type="ordered locus">CLL_A1225</name>
</gene>
<name>RL28_CLOBB</name>
<dbReference type="EMBL" id="CP001056">
    <property type="protein sequence ID" value="ACD22832.1"/>
    <property type="molecule type" value="Genomic_DNA"/>
</dbReference>
<dbReference type="SMR" id="B2THS7"/>
<dbReference type="KEGG" id="cbk:CLL_A1225"/>
<dbReference type="PATRIC" id="fig|935198.13.peg.1170"/>
<dbReference type="HOGENOM" id="CLU_064548_7_0_9"/>
<dbReference type="Proteomes" id="UP000001195">
    <property type="component" value="Chromosome"/>
</dbReference>
<dbReference type="GO" id="GO:1990904">
    <property type="term" value="C:ribonucleoprotein complex"/>
    <property type="evidence" value="ECO:0007669"/>
    <property type="project" value="UniProtKB-KW"/>
</dbReference>
<dbReference type="GO" id="GO:0005840">
    <property type="term" value="C:ribosome"/>
    <property type="evidence" value="ECO:0007669"/>
    <property type="project" value="UniProtKB-KW"/>
</dbReference>
<dbReference type="GO" id="GO:0003735">
    <property type="term" value="F:structural constituent of ribosome"/>
    <property type="evidence" value="ECO:0007669"/>
    <property type="project" value="InterPro"/>
</dbReference>
<dbReference type="GO" id="GO:0006412">
    <property type="term" value="P:translation"/>
    <property type="evidence" value="ECO:0007669"/>
    <property type="project" value="UniProtKB-UniRule"/>
</dbReference>
<dbReference type="Gene3D" id="2.30.170.40">
    <property type="entry name" value="Ribosomal protein L28/L24"/>
    <property type="match status" value="1"/>
</dbReference>
<dbReference type="HAMAP" id="MF_00373">
    <property type="entry name" value="Ribosomal_bL28"/>
    <property type="match status" value="1"/>
</dbReference>
<dbReference type="InterPro" id="IPR050096">
    <property type="entry name" value="Bacterial_rp_bL28"/>
</dbReference>
<dbReference type="InterPro" id="IPR026569">
    <property type="entry name" value="Ribosomal_bL28"/>
</dbReference>
<dbReference type="InterPro" id="IPR034704">
    <property type="entry name" value="Ribosomal_bL28/bL31-like_sf"/>
</dbReference>
<dbReference type="InterPro" id="IPR001383">
    <property type="entry name" value="Ribosomal_bL28_bact-type"/>
</dbReference>
<dbReference type="InterPro" id="IPR037147">
    <property type="entry name" value="Ribosomal_bL28_sf"/>
</dbReference>
<dbReference type="NCBIfam" id="TIGR00009">
    <property type="entry name" value="L28"/>
    <property type="match status" value="1"/>
</dbReference>
<dbReference type="PANTHER" id="PTHR39080">
    <property type="entry name" value="50S RIBOSOMAL PROTEIN L28"/>
    <property type="match status" value="1"/>
</dbReference>
<dbReference type="PANTHER" id="PTHR39080:SF1">
    <property type="entry name" value="LARGE RIBOSOMAL SUBUNIT PROTEIN BL28A"/>
    <property type="match status" value="1"/>
</dbReference>
<dbReference type="Pfam" id="PF00830">
    <property type="entry name" value="Ribosomal_L28"/>
    <property type="match status" value="1"/>
</dbReference>
<dbReference type="SUPFAM" id="SSF143800">
    <property type="entry name" value="L28p-like"/>
    <property type="match status" value="1"/>
</dbReference>
<sequence>MARRCEICDKGVVAGVQFSHSHRQSKRTWAPNIKKIKALVNGTPKTVRVCTRCLRSGKVQRAI</sequence>
<feature type="chain" id="PRO_1000121608" description="Large ribosomal subunit protein bL28">
    <location>
        <begin position="1"/>
        <end position="63"/>
    </location>
</feature>
<reference key="1">
    <citation type="submission" date="2008-04" db="EMBL/GenBank/DDBJ databases">
        <title>Complete sequence of Clostridium botulinum strain Eklund.</title>
        <authorList>
            <person name="Brinkac L.M."/>
            <person name="Brown J.L."/>
            <person name="Bruce D."/>
            <person name="Detter C."/>
            <person name="Munk C."/>
            <person name="Smith L.A."/>
            <person name="Smith T.J."/>
            <person name="Sutton G."/>
            <person name="Brettin T.S."/>
        </authorList>
    </citation>
    <scope>NUCLEOTIDE SEQUENCE [LARGE SCALE GENOMIC DNA]</scope>
    <source>
        <strain>Eklund 17B / Type B</strain>
    </source>
</reference>
<organism>
    <name type="scientific">Clostridium botulinum (strain Eklund 17B / Type B)</name>
    <dbReference type="NCBI Taxonomy" id="935198"/>
    <lineage>
        <taxon>Bacteria</taxon>
        <taxon>Bacillati</taxon>
        <taxon>Bacillota</taxon>
        <taxon>Clostridia</taxon>
        <taxon>Eubacteriales</taxon>
        <taxon>Clostridiaceae</taxon>
        <taxon>Clostridium</taxon>
    </lineage>
</organism>
<comment type="similarity">
    <text evidence="1">Belongs to the bacterial ribosomal protein bL28 family.</text>
</comment>
<proteinExistence type="inferred from homology"/>
<keyword id="KW-0687">Ribonucleoprotein</keyword>
<keyword id="KW-0689">Ribosomal protein</keyword>